<proteinExistence type="evidence at transcript level"/>
<comment type="function">
    <text evidence="1">Protein-lysine N-methyltransferase that monomethylates both histones and non-histone proteins. Specifically monomethylates 'Lys-20' of histone H4 (H4K20me1). H4K20me1 is enriched during mitosis and represents a specific tag for epigenetic transcriptional repression. Mainly functions in euchromatin regions, thereby playing a central role in the silencing of euchromatic genes. Required for cell proliferation, probably by contributing to the maintenance of proper higher-order structure of DNA during mitosis. Involved in chromosome condensation and proper cytokinesis. Nucleosomes are preferred as substrate compared to free histones. Mediates monomethylation of p53/TP53 at 'Lys-382', leading to repress p53/TP53-target genes. Plays a negative role in TGF-beta response regulation and a positive role in cell migration.</text>
</comment>
<comment type="catalytic activity">
    <reaction evidence="1 3">
        <text>L-lysyl(20)-[histone H4] + S-adenosyl-L-methionine = N(6)-methyl-L-lysyl(20)-[histone H4] + S-adenosyl-L-homocysteine + H(+)</text>
        <dbReference type="Rhea" id="RHEA:60344"/>
        <dbReference type="Rhea" id="RHEA-COMP:15554"/>
        <dbReference type="Rhea" id="RHEA-COMP:15555"/>
        <dbReference type="ChEBI" id="CHEBI:15378"/>
        <dbReference type="ChEBI" id="CHEBI:29969"/>
        <dbReference type="ChEBI" id="CHEBI:57856"/>
        <dbReference type="ChEBI" id="CHEBI:59789"/>
        <dbReference type="ChEBI" id="CHEBI:61929"/>
        <dbReference type="EC" id="2.1.1.361"/>
    </reaction>
</comment>
<comment type="catalytic activity">
    <reaction evidence="1">
        <text>L-lysyl-[protein] + S-adenosyl-L-methionine = N(6)-methyl-L-lysyl-[protein] + S-adenosyl-L-homocysteine + H(+)</text>
        <dbReference type="Rhea" id="RHEA:51736"/>
        <dbReference type="Rhea" id="RHEA-COMP:9752"/>
        <dbReference type="Rhea" id="RHEA-COMP:13053"/>
        <dbReference type="ChEBI" id="CHEBI:15378"/>
        <dbReference type="ChEBI" id="CHEBI:29969"/>
        <dbReference type="ChEBI" id="CHEBI:57856"/>
        <dbReference type="ChEBI" id="CHEBI:59789"/>
        <dbReference type="ChEBI" id="CHEBI:61929"/>
    </reaction>
</comment>
<comment type="subcellular location">
    <subcellularLocation>
        <location evidence="1">Nucleus</location>
    </subcellularLocation>
    <subcellularLocation>
        <location evidence="1">Chromosome</location>
    </subcellularLocation>
    <text evidence="1">Specifically localizes to mitotic chromosomes. Associates with silent chromatin on euchromatic arms (By similarity).</text>
</comment>
<comment type="similarity">
    <text evidence="3">Belongs to the class V-like SAM-binding methyltransferase superfamily. Histone-lysine methyltransferase family. PR/SET subfamily.</text>
</comment>
<feature type="chain" id="PRO_0000317002" description="N-lysine methyltransferase KMT5A">
    <location>
        <begin position="1"/>
        <end position="336"/>
    </location>
</feature>
<feature type="domain" description="SET" evidence="2">
    <location>
        <begin position="200"/>
        <end position="321"/>
    </location>
</feature>
<feature type="region of interest" description="Disordered" evidence="4">
    <location>
        <begin position="1"/>
        <end position="112"/>
    </location>
</feature>
<feature type="compositionally biased region" description="Basic and acidic residues" evidence="4">
    <location>
        <begin position="67"/>
        <end position="93"/>
    </location>
</feature>
<feature type="binding site" evidence="3">
    <location>
        <begin position="210"/>
        <end position="212"/>
    </location>
    <ligand>
        <name>S-adenosyl-L-methionine</name>
        <dbReference type="ChEBI" id="CHEBI:59789"/>
    </ligand>
</feature>
<feature type="binding site" evidence="2 3">
    <location>
        <position position="255"/>
    </location>
    <ligand>
        <name>S-adenosyl-L-methionine</name>
        <dbReference type="ChEBI" id="CHEBI:59789"/>
    </ligand>
</feature>
<feature type="binding site" evidence="3">
    <location>
        <begin position="282"/>
        <end position="283"/>
    </location>
    <ligand>
        <name>S-adenosyl-L-methionine</name>
        <dbReference type="ChEBI" id="CHEBI:59789"/>
    </ligand>
</feature>
<name>KMT5A_XENTR</name>
<organism>
    <name type="scientific">Xenopus tropicalis</name>
    <name type="common">Western clawed frog</name>
    <name type="synonym">Silurana tropicalis</name>
    <dbReference type="NCBI Taxonomy" id="8364"/>
    <lineage>
        <taxon>Eukaryota</taxon>
        <taxon>Metazoa</taxon>
        <taxon>Chordata</taxon>
        <taxon>Craniata</taxon>
        <taxon>Vertebrata</taxon>
        <taxon>Euteleostomi</taxon>
        <taxon>Amphibia</taxon>
        <taxon>Batrachia</taxon>
        <taxon>Anura</taxon>
        <taxon>Pipoidea</taxon>
        <taxon>Pipidae</taxon>
        <taxon>Xenopodinae</taxon>
        <taxon>Xenopus</taxon>
        <taxon>Silurana</taxon>
    </lineage>
</organism>
<reference key="1">
    <citation type="submission" date="2006-08" db="EMBL/GenBank/DDBJ databases">
        <authorList>
            <consortium name="NIH - Xenopus Gene Collection (XGC) project"/>
        </authorList>
    </citation>
    <scope>NUCLEOTIDE SEQUENCE [LARGE SCALE MRNA]</scope>
    <source>
        <strain>N6</strain>
        <tissue>Ovary</tissue>
    </source>
</reference>
<gene>
    <name evidence="1" type="primary">kmt5a</name>
    <name type="synonym">setd8</name>
</gene>
<dbReference type="EC" id="2.1.1.-" evidence="1"/>
<dbReference type="EC" id="2.1.1.361" evidence="1"/>
<dbReference type="EMBL" id="BC121601">
    <property type="protein sequence ID" value="AAI21602.1"/>
    <property type="molecule type" value="mRNA"/>
</dbReference>
<dbReference type="RefSeq" id="NP_001072815.1">
    <property type="nucleotide sequence ID" value="NM_001079347.1"/>
</dbReference>
<dbReference type="SMR" id="Q0V9E9"/>
<dbReference type="FunCoup" id="Q0V9E9">
    <property type="interactions" value="1802"/>
</dbReference>
<dbReference type="STRING" id="8364.ENSXETP00000004789"/>
<dbReference type="PaxDb" id="8364-ENSXETP00000012803"/>
<dbReference type="DNASU" id="780276"/>
<dbReference type="GeneID" id="780276"/>
<dbReference type="KEGG" id="xtr:780276"/>
<dbReference type="AGR" id="Xenbase:XB-GENE-489177"/>
<dbReference type="CTD" id="387893"/>
<dbReference type="Xenbase" id="XB-GENE-489177">
    <property type="gene designation" value="kmt5a"/>
</dbReference>
<dbReference type="eggNOG" id="KOG1085">
    <property type="taxonomic scope" value="Eukaryota"/>
</dbReference>
<dbReference type="HOGENOM" id="CLU_047978_0_1_1"/>
<dbReference type="InParanoid" id="Q0V9E9"/>
<dbReference type="OMA" id="GMKMDMI"/>
<dbReference type="OrthoDB" id="5560686at2759"/>
<dbReference type="PhylomeDB" id="Q0V9E9"/>
<dbReference type="TreeFam" id="TF335181"/>
<dbReference type="Reactome" id="R-XTR-2299718">
    <property type="pathway name" value="Condensation of Prophase Chromosomes"/>
</dbReference>
<dbReference type="Reactome" id="R-XTR-6804760">
    <property type="pathway name" value="Regulation of TP53 Activity through Methylation"/>
</dbReference>
<dbReference type="Proteomes" id="UP000008143">
    <property type="component" value="Chromosome 1"/>
</dbReference>
<dbReference type="Bgee" id="ENSXETG00000005820">
    <property type="expression patterns" value="Expressed in ovary and 20 other cell types or tissues"/>
</dbReference>
<dbReference type="ExpressionAtlas" id="Q0V9E9">
    <property type="expression patterns" value="baseline"/>
</dbReference>
<dbReference type="GO" id="GO:0005694">
    <property type="term" value="C:chromosome"/>
    <property type="evidence" value="ECO:0007669"/>
    <property type="project" value="UniProtKB-SubCell"/>
</dbReference>
<dbReference type="GO" id="GO:0005634">
    <property type="term" value="C:nucleus"/>
    <property type="evidence" value="ECO:0007669"/>
    <property type="project" value="UniProtKB-SubCell"/>
</dbReference>
<dbReference type="GO" id="GO:0140944">
    <property type="term" value="F:histone H4K20 monomethyltransferase activity"/>
    <property type="evidence" value="ECO:0007669"/>
    <property type="project" value="UniProtKB-EC"/>
</dbReference>
<dbReference type="GO" id="GO:0042054">
    <property type="term" value="F:histone methyltransferase activity"/>
    <property type="evidence" value="ECO:0000250"/>
    <property type="project" value="UniProtKB"/>
</dbReference>
<dbReference type="GO" id="GO:0051301">
    <property type="term" value="P:cell division"/>
    <property type="evidence" value="ECO:0007669"/>
    <property type="project" value="UniProtKB-KW"/>
</dbReference>
<dbReference type="GO" id="GO:0032259">
    <property type="term" value="P:methylation"/>
    <property type="evidence" value="ECO:0007669"/>
    <property type="project" value="UniProtKB-KW"/>
</dbReference>
<dbReference type="CDD" id="cd10528">
    <property type="entry name" value="SET_SETD8"/>
    <property type="match status" value="1"/>
</dbReference>
<dbReference type="FunFam" id="2.170.270.10:FF:000021">
    <property type="entry name" value="Histone-lysine N-methyltransferase"/>
    <property type="match status" value="1"/>
</dbReference>
<dbReference type="Gene3D" id="2.170.270.10">
    <property type="entry name" value="SET domain"/>
    <property type="match status" value="1"/>
</dbReference>
<dbReference type="InterPro" id="IPR051760">
    <property type="entry name" value="KMT5A"/>
</dbReference>
<dbReference type="InterPro" id="IPR016858">
    <property type="entry name" value="KMT5A-like"/>
</dbReference>
<dbReference type="InterPro" id="IPR047266">
    <property type="entry name" value="KMT5A-like_SET"/>
</dbReference>
<dbReference type="InterPro" id="IPR001214">
    <property type="entry name" value="SET_dom"/>
</dbReference>
<dbReference type="InterPro" id="IPR046341">
    <property type="entry name" value="SET_dom_sf"/>
</dbReference>
<dbReference type="PANTHER" id="PTHR46167">
    <property type="entry name" value="N-LYSINE METHYLTRANSFERASE KMT5A"/>
    <property type="match status" value="1"/>
</dbReference>
<dbReference type="PANTHER" id="PTHR46167:SF1">
    <property type="entry name" value="N-LYSINE METHYLTRANSFERASE KMT5A"/>
    <property type="match status" value="1"/>
</dbReference>
<dbReference type="Pfam" id="PF00856">
    <property type="entry name" value="SET"/>
    <property type="match status" value="1"/>
</dbReference>
<dbReference type="PIRSF" id="PIRSF027717">
    <property type="entry name" value="Histone_H4-K20_mtfrase"/>
    <property type="match status" value="1"/>
</dbReference>
<dbReference type="SMART" id="SM00317">
    <property type="entry name" value="SET"/>
    <property type="match status" value="1"/>
</dbReference>
<dbReference type="SUPFAM" id="SSF82199">
    <property type="entry name" value="SET domain"/>
    <property type="match status" value="1"/>
</dbReference>
<dbReference type="PROSITE" id="PS51571">
    <property type="entry name" value="SAM_MT43_PR_SET"/>
    <property type="match status" value="1"/>
</dbReference>
<dbReference type="PROSITE" id="PS50280">
    <property type="entry name" value="SET"/>
    <property type="match status" value="1"/>
</dbReference>
<sequence length="336" mass="38237">MGRGKKMSKPGDGRSGDVPDTGRTGGTNENHPKINGEVAHLGQPKIYSFMSPTKSPSARPPLQEENSVAHHESKCPGKPLTETRKKAEVEKKRISSGTELSVKPSEQRETECNSIGEFLDPKQEQTDVRRNIALPPADKLNHQKMVKDKPLRRKAQRKKSPNRKLTDYYPVRRSCRKSKTELESEEKKRIDELIQTGKEEGMKMDMITGKGRGVIATRDFQRGEFVVEYHGDLIEITDAKRREATYAQDSNTGCYMYYFQYLNKTYCIDATRETGRLGRLINHSKSGNCHTKLHNINNVPHLILVASRDINVGEELLYDYGDRRKSSLEAHPWLKN</sequence>
<evidence type="ECO:0000250" key="1">
    <source>
        <dbReference type="UniProtKB" id="Q9NQR1"/>
    </source>
</evidence>
<evidence type="ECO:0000255" key="2">
    <source>
        <dbReference type="PROSITE-ProRule" id="PRU00190"/>
    </source>
</evidence>
<evidence type="ECO:0000255" key="3">
    <source>
        <dbReference type="PROSITE-ProRule" id="PRU00904"/>
    </source>
</evidence>
<evidence type="ECO:0000256" key="4">
    <source>
        <dbReference type="SAM" id="MobiDB-lite"/>
    </source>
</evidence>
<evidence type="ECO:0000305" key="5"/>
<keyword id="KW-0131">Cell cycle</keyword>
<keyword id="KW-0132">Cell division</keyword>
<keyword id="KW-0156">Chromatin regulator</keyword>
<keyword id="KW-0158">Chromosome</keyword>
<keyword id="KW-0489">Methyltransferase</keyword>
<keyword id="KW-0498">Mitosis</keyword>
<keyword id="KW-0539">Nucleus</keyword>
<keyword id="KW-1185">Reference proteome</keyword>
<keyword id="KW-0678">Repressor</keyword>
<keyword id="KW-0949">S-adenosyl-L-methionine</keyword>
<keyword id="KW-0804">Transcription</keyword>
<keyword id="KW-0805">Transcription regulation</keyword>
<keyword id="KW-0808">Transferase</keyword>
<accession>Q0V9E9</accession>
<protein>
    <recommendedName>
        <fullName evidence="5">N-lysine methyltransferase KMT5A</fullName>
        <ecNumber evidence="1">2.1.1.-</ecNumber>
    </recommendedName>
    <alternativeName>
        <fullName>Histone-lysine N-methyltransferase KMT5A</fullName>
        <ecNumber evidence="1">2.1.1.361</ecNumber>
    </alternativeName>
    <alternativeName>
        <fullName evidence="1">Lysine-specific methylase 5A</fullName>
    </alternativeName>
    <alternativeName>
        <fullName>SET domain-containing protein 8</fullName>
    </alternativeName>
</protein>